<name>AMYD_THETU</name>
<reference key="1">
    <citation type="journal article" date="1991" name="FEMS Microbiol. Lett.">
        <title>Nucleotide sequence of two Clostridium thermosulfurogenes EM1 genes homologous to Escherichia coli genes encoding integral membrane components of binding protein-dependent transport systems.</title>
        <authorList>
            <person name="Bahl H."/>
            <person name="Burchhardt G."/>
            <person name="Wienecke A."/>
        </authorList>
    </citation>
    <scope>NUCLEOTIDE SEQUENCE [GENOMIC DNA]</scope>
    <source>
        <strain>DSM 3896 / EM1</strain>
    </source>
</reference>
<accession>P37730</accession>
<keyword id="KW-1003">Cell membrane</keyword>
<keyword id="KW-0472">Membrane</keyword>
<keyword id="KW-0812">Transmembrane</keyword>
<keyword id="KW-1133">Transmembrane helix</keyword>
<keyword id="KW-0813">Transport</keyword>
<comment type="function">
    <text>Probably part of a binding-protein-dependent transport system starch degradation products. Probably responsible for the translocation of the substrate across the membrane.</text>
</comment>
<comment type="subcellular location">
    <subcellularLocation>
        <location evidence="2">Cell membrane</location>
        <topology evidence="1">Multi-pass membrane protein</topology>
    </subcellularLocation>
</comment>
<comment type="similarity">
    <text evidence="2">Belongs to the binding-protein-dependent transport system permease family. MalFG subfamily.</text>
</comment>
<evidence type="ECO:0000255" key="1">
    <source>
        <dbReference type="PROSITE-ProRule" id="PRU00441"/>
    </source>
</evidence>
<evidence type="ECO:0000305" key="2"/>
<dbReference type="EMBL" id="M57692">
    <property type="protein sequence ID" value="AAB00843.1"/>
    <property type="molecule type" value="Genomic_DNA"/>
</dbReference>
<dbReference type="PIR" id="S37704">
    <property type="entry name" value="S37704"/>
</dbReference>
<dbReference type="SMR" id="P37730"/>
<dbReference type="GO" id="GO:0005886">
    <property type="term" value="C:plasma membrane"/>
    <property type="evidence" value="ECO:0007669"/>
    <property type="project" value="UniProtKB-SubCell"/>
</dbReference>
<dbReference type="GO" id="GO:0055085">
    <property type="term" value="P:transmembrane transport"/>
    <property type="evidence" value="ECO:0007669"/>
    <property type="project" value="InterPro"/>
</dbReference>
<dbReference type="CDD" id="cd06261">
    <property type="entry name" value="TM_PBP2"/>
    <property type="match status" value="1"/>
</dbReference>
<dbReference type="Gene3D" id="1.10.3720.10">
    <property type="entry name" value="MetI-like"/>
    <property type="match status" value="1"/>
</dbReference>
<dbReference type="InterPro" id="IPR051393">
    <property type="entry name" value="ABC_transporter_permease"/>
</dbReference>
<dbReference type="InterPro" id="IPR000515">
    <property type="entry name" value="MetI-like"/>
</dbReference>
<dbReference type="InterPro" id="IPR035906">
    <property type="entry name" value="MetI-like_sf"/>
</dbReference>
<dbReference type="PANTHER" id="PTHR30193">
    <property type="entry name" value="ABC TRANSPORTER PERMEASE PROTEIN"/>
    <property type="match status" value="1"/>
</dbReference>
<dbReference type="PANTHER" id="PTHR30193:SF37">
    <property type="entry name" value="INNER MEMBRANE ABC TRANSPORTER PERMEASE PROTEIN YCJO"/>
    <property type="match status" value="1"/>
</dbReference>
<dbReference type="Pfam" id="PF00528">
    <property type="entry name" value="BPD_transp_1"/>
    <property type="match status" value="1"/>
</dbReference>
<dbReference type="SUPFAM" id="SSF161098">
    <property type="entry name" value="MetI-like"/>
    <property type="match status" value="1"/>
</dbReference>
<dbReference type="PROSITE" id="PS50928">
    <property type="entry name" value="ABC_TM1"/>
    <property type="match status" value="1"/>
</dbReference>
<gene>
    <name type="primary">amyD</name>
</gene>
<protein>
    <recommendedName>
        <fullName>Probable starch degradation products transport system permease protein AmyD</fullName>
    </recommendedName>
</protein>
<organism>
    <name type="scientific">Thermoanaerobacterium thermosulfurigenes</name>
    <name type="common">Clostridium thermosulfurogenes</name>
    <dbReference type="NCBI Taxonomy" id="33950"/>
    <lineage>
        <taxon>Bacteria</taxon>
        <taxon>Bacillati</taxon>
        <taxon>Bacillota</taxon>
        <taxon>Clostridia</taxon>
        <taxon>Thermoanaerobacterales</taxon>
        <taxon>Thermoanaerobacteraceae</taxon>
        <taxon>Thermoanaerobacterium</taxon>
    </lineage>
</organism>
<sequence>MAKKAKFFKNGIWYWLFIAPTLLSLIIVVLIPFIIGIYYSFTDWNGINQPVFIGLKNFMTLRDDAEFWNSIIFTAKFAVACIVIINVVGLSLAMLVTRKIFARNFMRTAFYLPNLIGGLILGFIWNFIFVDVFQTISDATHIGWLGGWLSTTNTGFWGLVIVTSWQMIGYVMVIYIAYIESIPTDLIEASKIDGANSWQQFRNVVFPLIAPAFTVSLFITLSNSFKLFDQNLSLTAGAPGNTTQMITLNIYQTAFSAQEMAVGQAKAVIMFLIIAVISVIQVYLTQKREVEM</sequence>
<feature type="chain" id="PRO_0000059948" description="Probable starch degradation products transport system permease protein AmyD">
    <location>
        <begin position="1"/>
        <end position="292"/>
    </location>
</feature>
<feature type="transmembrane region" description="Helical" evidence="1">
    <location>
        <begin position="15"/>
        <end position="35"/>
    </location>
</feature>
<feature type="transmembrane region" description="Helical" evidence="1">
    <location>
        <begin position="77"/>
        <end position="97"/>
    </location>
</feature>
<feature type="transmembrane region" description="Helical" evidence="1">
    <location>
        <begin position="110"/>
        <end position="130"/>
    </location>
</feature>
<feature type="transmembrane region" description="Helical" evidence="1">
    <location>
        <begin position="156"/>
        <end position="176"/>
    </location>
</feature>
<feature type="transmembrane region" description="Helical" evidence="1">
    <location>
        <begin position="205"/>
        <end position="225"/>
    </location>
</feature>
<feature type="transmembrane region" description="Helical" evidence="1">
    <location>
        <begin position="260"/>
        <end position="280"/>
    </location>
</feature>
<feature type="domain" description="ABC transmembrane type-1" evidence="1">
    <location>
        <begin position="71"/>
        <end position="281"/>
    </location>
</feature>
<proteinExistence type="inferred from homology"/>